<sequence length="287" mass="31703">MKDNTCTKRDFLNGTKIGGDEPFFLISGPCVMENRDLLDRVCAEMIEVCGELKIPYIFKSSFDKANRSSVNSYRGPGLAEGIKNLEYIKNKYNVPVLTDIHETSQISPLKDVIDVYQIPAFLCRQTDLISQSAQTGKWVNVKKGQFLAPADTRHIAVKMNESGNNKLLVTERGTSFGYGNLIFDGRAIPIIHGFDIPLVFDATHSAQLPGAAGNSTGGQREFIPSILRSAVSFGIEGIFMEVHPDPPNALSDATTQYPLSQIKSLLKEMIGLDRYIKKEILISRSSL</sequence>
<gene>
    <name evidence="1" type="primary">kdsA</name>
    <name type="ordered locus">LA_2408</name>
</gene>
<organism>
    <name type="scientific">Leptospira interrogans serogroup Icterohaemorrhagiae serovar Lai (strain 56601)</name>
    <dbReference type="NCBI Taxonomy" id="189518"/>
    <lineage>
        <taxon>Bacteria</taxon>
        <taxon>Pseudomonadati</taxon>
        <taxon>Spirochaetota</taxon>
        <taxon>Spirochaetia</taxon>
        <taxon>Leptospirales</taxon>
        <taxon>Leptospiraceae</taxon>
        <taxon>Leptospira</taxon>
    </lineage>
</organism>
<reference key="1">
    <citation type="journal article" date="2003" name="Nature">
        <title>Unique physiological and pathogenic features of Leptospira interrogans revealed by whole-genome sequencing.</title>
        <authorList>
            <person name="Ren S.-X."/>
            <person name="Fu G."/>
            <person name="Jiang X.-G."/>
            <person name="Zeng R."/>
            <person name="Miao Y.-G."/>
            <person name="Xu H."/>
            <person name="Zhang Y.-X."/>
            <person name="Xiong H."/>
            <person name="Lu G."/>
            <person name="Lu L.-F."/>
            <person name="Jiang H.-Q."/>
            <person name="Jia J."/>
            <person name="Tu Y.-F."/>
            <person name="Jiang J.-X."/>
            <person name="Gu W.-Y."/>
            <person name="Zhang Y.-Q."/>
            <person name="Cai Z."/>
            <person name="Sheng H.-H."/>
            <person name="Yin H.-F."/>
            <person name="Zhang Y."/>
            <person name="Zhu G.-F."/>
            <person name="Wan M."/>
            <person name="Huang H.-L."/>
            <person name="Qian Z."/>
            <person name="Wang S.-Y."/>
            <person name="Ma W."/>
            <person name="Yao Z.-J."/>
            <person name="Shen Y."/>
            <person name="Qiang B.-Q."/>
            <person name="Xia Q.-C."/>
            <person name="Guo X.-K."/>
            <person name="Danchin A."/>
            <person name="Saint Girons I."/>
            <person name="Somerville R.L."/>
            <person name="Wen Y.-M."/>
            <person name="Shi M.-H."/>
            <person name="Chen Z."/>
            <person name="Xu J.-G."/>
            <person name="Zhao G.-P."/>
        </authorList>
    </citation>
    <scope>NUCLEOTIDE SEQUENCE [LARGE SCALE GENOMIC DNA]</scope>
    <source>
        <strain>56601</strain>
    </source>
</reference>
<evidence type="ECO:0000255" key="1">
    <source>
        <dbReference type="HAMAP-Rule" id="MF_00056"/>
    </source>
</evidence>
<protein>
    <recommendedName>
        <fullName evidence="1">2-dehydro-3-deoxyphosphooctonate aldolase</fullName>
        <ecNumber evidence="1">2.5.1.55</ecNumber>
    </recommendedName>
    <alternativeName>
        <fullName evidence="1">3-deoxy-D-manno-octulosonic acid 8-phosphate synthase</fullName>
    </alternativeName>
    <alternativeName>
        <fullName evidence="1">KDO-8-phosphate synthase</fullName>
        <shortName evidence="1">KDO 8-P synthase</shortName>
        <shortName evidence="1">KDOPS</shortName>
    </alternativeName>
    <alternativeName>
        <fullName evidence="1">Phospho-2-dehydro-3-deoxyoctonate aldolase</fullName>
    </alternativeName>
</protein>
<proteinExistence type="inferred from homology"/>
<feature type="chain" id="PRO_0000187139" description="2-dehydro-3-deoxyphosphooctonate aldolase">
    <location>
        <begin position="1"/>
        <end position="287"/>
    </location>
</feature>
<accession>Q8F3J4</accession>
<name>KDSA_LEPIN</name>
<dbReference type="EC" id="2.5.1.55" evidence="1"/>
<dbReference type="EMBL" id="AE010300">
    <property type="protein sequence ID" value="AAN49607.2"/>
    <property type="molecule type" value="Genomic_DNA"/>
</dbReference>
<dbReference type="RefSeq" id="NP_712589.2">
    <property type="nucleotide sequence ID" value="NC_004342.2"/>
</dbReference>
<dbReference type="SMR" id="Q8F3J4"/>
<dbReference type="FunCoup" id="Q8F3J4">
    <property type="interactions" value="361"/>
</dbReference>
<dbReference type="STRING" id="189518.LA_2408"/>
<dbReference type="PaxDb" id="189518-LA_2408"/>
<dbReference type="EnsemblBacteria" id="AAN49607">
    <property type="protein sequence ID" value="AAN49607"/>
    <property type="gene ID" value="LA_2408"/>
</dbReference>
<dbReference type="KEGG" id="lil:LA_2408"/>
<dbReference type="PATRIC" id="fig|189518.3.peg.2387"/>
<dbReference type="HOGENOM" id="CLU_036666_0_0_12"/>
<dbReference type="InParanoid" id="Q8F3J4"/>
<dbReference type="OrthoDB" id="9780456at2"/>
<dbReference type="UniPathway" id="UPA00030"/>
<dbReference type="UniPathway" id="UPA00357">
    <property type="reaction ID" value="UER00474"/>
</dbReference>
<dbReference type="Proteomes" id="UP000001408">
    <property type="component" value="Chromosome I"/>
</dbReference>
<dbReference type="GO" id="GO:0005829">
    <property type="term" value="C:cytosol"/>
    <property type="evidence" value="ECO:0000318"/>
    <property type="project" value="GO_Central"/>
</dbReference>
<dbReference type="GO" id="GO:0008676">
    <property type="term" value="F:3-deoxy-8-phosphooctulonate synthase activity"/>
    <property type="evidence" value="ECO:0000318"/>
    <property type="project" value="GO_Central"/>
</dbReference>
<dbReference type="GO" id="GO:0019294">
    <property type="term" value="P:keto-3-deoxy-D-manno-octulosonic acid biosynthetic process"/>
    <property type="evidence" value="ECO:0007669"/>
    <property type="project" value="UniProtKB-UniRule"/>
</dbReference>
<dbReference type="GO" id="GO:0046364">
    <property type="term" value="P:monosaccharide biosynthetic process"/>
    <property type="evidence" value="ECO:0000318"/>
    <property type="project" value="GO_Central"/>
</dbReference>
<dbReference type="Gene3D" id="3.20.20.70">
    <property type="entry name" value="Aldolase class I"/>
    <property type="match status" value="1"/>
</dbReference>
<dbReference type="HAMAP" id="MF_00056">
    <property type="entry name" value="KDO8P_synth"/>
    <property type="match status" value="1"/>
</dbReference>
<dbReference type="InterPro" id="IPR013785">
    <property type="entry name" value="Aldolase_TIM"/>
</dbReference>
<dbReference type="InterPro" id="IPR006218">
    <property type="entry name" value="DAHP1/KDSA"/>
</dbReference>
<dbReference type="InterPro" id="IPR006269">
    <property type="entry name" value="KDO8P_synthase"/>
</dbReference>
<dbReference type="NCBIfam" id="TIGR01362">
    <property type="entry name" value="KDO8P_synth"/>
    <property type="match status" value="1"/>
</dbReference>
<dbReference type="NCBIfam" id="NF003543">
    <property type="entry name" value="PRK05198.1"/>
    <property type="match status" value="1"/>
</dbReference>
<dbReference type="PANTHER" id="PTHR21057">
    <property type="entry name" value="PHOSPHO-2-DEHYDRO-3-DEOXYHEPTONATE ALDOLASE"/>
    <property type="match status" value="1"/>
</dbReference>
<dbReference type="Pfam" id="PF00793">
    <property type="entry name" value="DAHP_synth_1"/>
    <property type="match status" value="1"/>
</dbReference>
<dbReference type="SUPFAM" id="SSF51569">
    <property type="entry name" value="Aldolase"/>
    <property type="match status" value="1"/>
</dbReference>
<comment type="catalytic activity">
    <reaction evidence="1">
        <text>D-arabinose 5-phosphate + phosphoenolpyruvate + H2O = 3-deoxy-alpha-D-manno-2-octulosonate-8-phosphate + phosphate</text>
        <dbReference type="Rhea" id="RHEA:14053"/>
        <dbReference type="ChEBI" id="CHEBI:15377"/>
        <dbReference type="ChEBI" id="CHEBI:43474"/>
        <dbReference type="ChEBI" id="CHEBI:57693"/>
        <dbReference type="ChEBI" id="CHEBI:58702"/>
        <dbReference type="ChEBI" id="CHEBI:85985"/>
        <dbReference type="EC" id="2.5.1.55"/>
    </reaction>
</comment>
<comment type="pathway">
    <text evidence="1">Carbohydrate biosynthesis; 3-deoxy-D-manno-octulosonate biosynthesis; 3-deoxy-D-manno-octulosonate from D-ribulose 5-phosphate: step 2/3.</text>
</comment>
<comment type="pathway">
    <text evidence="1">Bacterial outer membrane biogenesis; lipopolysaccharide biosynthesis.</text>
</comment>
<comment type="subcellular location">
    <subcellularLocation>
        <location evidence="1">Cytoplasm</location>
    </subcellularLocation>
</comment>
<comment type="similarity">
    <text evidence="1">Belongs to the KdsA family.</text>
</comment>
<keyword id="KW-0963">Cytoplasm</keyword>
<keyword id="KW-0448">Lipopolysaccharide biosynthesis</keyword>
<keyword id="KW-1185">Reference proteome</keyword>
<keyword id="KW-0808">Transferase</keyword>